<accession>Q0K844</accession>
<organism>
    <name type="scientific">Cupriavidus necator (strain ATCC 17699 / DSM 428 / KCTC 22496 / NCIMB 10442 / H16 / Stanier 337)</name>
    <name type="common">Ralstonia eutropha</name>
    <dbReference type="NCBI Taxonomy" id="381666"/>
    <lineage>
        <taxon>Bacteria</taxon>
        <taxon>Pseudomonadati</taxon>
        <taxon>Pseudomonadota</taxon>
        <taxon>Betaproteobacteria</taxon>
        <taxon>Burkholderiales</taxon>
        <taxon>Burkholderiaceae</taxon>
        <taxon>Cupriavidus</taxon>
    </lineage>
</organism>
<sequence length="509" mass="54259">MNARTEPEVFDTLAALIAVRAAQWPDKPYLLSPDSGHALTFGALATDAGTLGRSYAAAGLGSGQTVSVYLPNGEQTARLLLGTMACGLVVNPINLLCQPAQLRYILAHSDTRLVFTWPDGEAAIREALREAGLDVPVLVTAPDANSLPALPATHDAASPLPPPQPDAPALLMYTSGTTGTPKGVLLTQRNLVANGTNVSREHCLGPADRVLATLPLYHINGLVVTAIAPLVHGGSVVMPMRFSASAFWQDSARHGCTWLNVVPTIIAYLLNDPHGQAPAGVRFCRSASAALPPEHHRAFEARFGIGVIETMGMTETAAPAFSNPLDPGQRRIGSIGRPSGTRARVLGRDGKPAPDGQVGEIVLQGESVMAGYYKAPDITREAFTHDGWLRTGDLGYRDADGYFYISGRAKELIIKGGENIAPREIDEALLRHPGVLEAAAVGVPDPAYGQEIVAYVVMREAARCDDAALRAHCLRELGRYKTPKEFRFIAELPRGPSGKVQRLKLLNHA</sequence>
<proteinExistence type="evidence at transcript level"/>
<gene>
    <name evidence="3" type="primary">sauT</name>
    <name type="ordered locus">H16_A2748</name>
</gene>
<evidence type="ECO:0000256" key="1">
    <source>
        <dbReference type="SAM" id="MobiDB-lite"/>
    </source>
</evidence>
<evidence type="ECO:0000269" key="2">
    <source>
    </source>
</evidence>
<evidence type="ECO:0000303" key="3">
    <source>
    </source>
</evidence>
<evidence type="ECO:0000305" key="4"/>
<protein>
    <recommendedName>
        <fullName evidence="3">Sulfoacetate--CoA ligase</fullName>
        <ecNumber evidence="2">6.2.1.-</ecNumber>
    </recommendedName>
</protein>
<name>SAUT_CUPNH</name>
<comment type="function">
    <text evidence="2">Involved in the degradation of sulfoacetate, a widespread natural product (PubMed:20693281). Catalyzes the CoA- and ATP-dependent conversion of sulfoacetate to sulfoacetyl-CoA and AMP (PubMed:20693281).</text>
</comment>
<comment type="catalytic activity">
    <reaction evidence="2">
        <text>sulfoacetate + ATP + CoA = sulfoacetyl-CoA + AMP + diphosphate</text>
        <dbReference type="Rhea" id="RHEA:75003"/>
        <dbReference type="ChEBI" id="CHEBI:30616"/>
        <dbReference type="ChEBI" id="CHEBI:33019"/>
        <dbReference type="ChEBI" id="CHEBI:57287"/>
        <dbReference type="ChEBI" id="CHEBI:58824"/>
        <dbReference type="ChEBI" id="CHEBI:61994"/>
        <dbReference type="ChEBI" id="CHEBI:456215"/>
    </reaction>
    <physiologicalReaction direction="left-to-right" evidence="2">
        <dbReference type="Rhea" id="RHEA:75004"/>
    </physiologicalReaction>
</comment>
<comment type="subcellular location">
    <subcellularLocation>
        <location evidence="2">Cytoplasm</location>
    </subcellularLocation>
</comment>
<comment type="induction">
    <text evidence="2">Induced by sulfoacetate.</text>
</comment>
<comment type="disruption phenotype">
    <text evidence="2">Mutants do not grow with sulfoacetate, but can use acetate, taurine, isethionate and sulfoacetaldehyde.</text>
</comment>
<comment type="similarity">
    <text evidence="4">Belongs to the ATP-dependent AMP-binding enzyme family.</text>
</comment>
<reference key="1">
    <citation type="journal article" date="2006" name="Nat. Biotechnol.">
        <title>Genome sequence of the bioplastic-producing 'Knallgas' bacterium Ralstonia eutropha H16.</title>
        <authorList>
            <person name="Pohlmann A."/>
            <person name="Fricke W.F."/>
            <person name="Reinecke F."/>
            <person name="Kusian B."/>
            <person name="Liesegang H."/>
            <person name="Cramm R."/>
            <person name="Eitinger T."/>
            <person name="Ewering C."/>
            <person name="Poetter M."/>
            <person name="Schwartz E."/>
            <person name="Strittmatter A."/>
            <person name="Voss I."/>
            <person name="Gottschalk G."/>
            <person name="Steinbuechel A."/>
            <person name="Friedrich B."/>
            <person name="Bowien B."/>
        </authorList>
    </citation>
    <scope>NUCLEOTIDE SEQUENCE [LARGE SCALE GENOMIC DNA]</scope>
    <source>
        <strain>ATCC 17699 / DSM 428 / KCTC 22496 / NCIMB 10442 / H16 / Stanier 337</strain>
    </source>
</reference>
<reference key="2">
    <citation type="journal article" date="2010" name="J. Biol. Chem.">
        <title>Sulfoacetate is degraded via a novel pathway involving sulfoacetyl-CoA and sulfoacetaldehyde in Cupriavidus necator H16.</title>
        <authorList>
            <person name="Weinitschke S."/>
            <person name="Hollemeyer K."/>
            <person name="Kusian B."/>
            <person name="Bowien B."/>
            <person name="Smits T.H."/>
            <person name="Cook A.M."/>
        </authorList>
    </citation>
    <scope>FUNCTION</scope>
    <scope>SUBCELLULAR LOCATION</scope>
    <scope>INDUCTION</scope>
    <scope>DISRUPTION PHENOTYPE</scope>
    <scope>GENE NAME</scope>
    <source>
        <strain>ATCC 17699 / DSM 428 / KCTC 22496 / NCIMB 10442 / H16 / Stanier 337</strain>
    </source>
</reference>
<feature type="chain" id="PRO_0000418823" description="Sulfoacetate--CoA ligase">
    <location>
        <begin position="1"/>
        <end position="509"/>
    </location>
</feature>
<feature type="region of interest" description="Disordered" evidence="1">
    <location>
        <begin position="320"/>
        <end position="340"/>
    </location>
</feature>
<keyword id="KW-0067">ATP-binding</keyword>
<keyword id="KW-0963">Cytoplasm</keyword>
<keyword id="KW-0436">Ligase</keyword>
<keyword id="KW-0547">Nucleotide-binding</keyword>
<keyword id="KW-1185">Reference proteome</keyword>
<dbReference type="EC" id="6.2.1.-" evidence="2"/>
<dbReference type="EMBL" id="AM260479">
    <property type="protein sequence ID" value="CAJ93827.1"/>
    <property type="molecule type" value="Genomic_DNA"/>
</dbReference>
<dbReference type="RefSeq" id="WP_011615810.1">
    <property type="nucleotide sequence ID" value="NC_008313.1"/>
</dbReference>
<dbReference type="SMR" id="Q0K844"/>
<dbReference type="STRING" id="381666.H16_A2748"/>
<dbReference type="KEGG" id="reh:H16_A2748"/>
<dbReference type="PATRIC" id="fig|381666.6.peg.3144"/>
<dbReference type="eggNOG" id="COG0318">
    <property type="taxonomic scope" value="Bacteria"/>
</dbReference>
<dbReference type="HOGENOM" id="CLU_000022_59_10_4"/>
<dbReference type="OrthoDB" id="9766486at2"/>
<dbReference type="BioCyc" id="MetaCyc:MONOMER-15851"/>
<dbReference type="Proteomes" id="UP000008210">
    <property type="component" value="Chromosome 1"/>
</dbReference>
<dbReference type="GO" id="GO:0005737">
    <property type="term" value="C:cytoplasm"/>
    <property type="evidence" value="ECO:0007669"/>
    <property type="project" value="UniProtKB-SubCell"/>
</dbReference>
<dbReference type="GO" id="GO:0005524">
    <property type="term" value="F:ATP binding"/>
    <property type="evidence" value="ECO:0007669"/>
    <property type="project" value="UniProtKB-KW"/>
</dbReference>
<dbReference type="GO" id="GO:0031956">
    <property type="term" value="F:medium-chain fatty acid-CoA ligase activity"/>
    <property type="evidence" value="ECO:0007669"/>
    <property type="project" value="TreeGrafter"/>
</dbReference>
<dbReference type="GO" id="GO:0006631">
    <property type="term" value="P:fatty acid metabolic process"/>
    <property type="evidence" value="ECO:0007669"/>
    <property type="project" value="TreeGrafter"/>
</dbReference>
<dbReference type="CDD" id="cd05926">
    <property type="entry name" value="FACL_fum10p_like"/>
    <property type="match status" value="1"/>
</dbReference>
<dbReference type="Gene3D" id="3.30.300.30">
    <property type="match status" value="1"/>
</dbReference>
<dbReference type="Gene3D" id="3.40.50.12780">
    <property type="entry name" value="N-terminal domain of ligase-like"/>
    <property type="match status" value="1"/>
</dbReference>
<dbReference type="InterPro" id="IPR025110">
    <property type="entry name" value="AMP-bd_C"/>
</dbReference>
<dbReference type="InterPro" id="IPR045851">
    <property type="entry name" value="AMP-bd_C_sf"/>
</dbReference>
<dbReference type="InterPro" id="IPR020845">
    <property type="entry name" value="AMP-binding_CS"/>
</dbReference>
<dbReference type="InterPro" id="IPR000873">
    <property type="entry name" value="AMP-dep_synth/lig_dom"/>
</dbReference>
<dbReference type="InterPro" id="IPR042099">
    <property type="entry name" value="ANL_N_sf"/>
</dbReference>
<dbReference type="InterPro" id="IPR045310">
    <property type="entry name" value="Pcs60-like"/>
</dbReference>
<dbReference type="PANTHER" id="PTHR43201">
    <property type="entry name" value="ACYL-COA SYNTHETASE"/>
    <property type="match status" value="1"/>
</dbReference>
<dbReference type="PANTHER" id="PTHR43201:SF5">
    <property type="entry name" value="MEDIUM-CHAIN ACYL-COA LIGASE ACSF2, MITOCHONDRIAL"/>
    <property type="match status" value="1"/>
</dbReference>
<dbReference type="Pfam" id="PF00501">
    <property type="entry name" value="AMP-binding"/>
    <property type="match status" value="1"/>
</dbReference>
<dbReference type="Pfam" id="PF13193">
    <property type="entry name" value="AMP-binding_C"/>
    <property type="match status" value="1"/>
</dbReference>
<dbReference type="SUPFAM" id="SSF56801">
    <property type="entry name" value="Acetyl-CoA synthetase-like"/>
    <property type="match status" value="1"/>
</dbReference>
<dbReference type="PROSITE" id="PS00455">
    <property type="entry name" value="AMP_BINDING"/>
    <property type="match status" value="1"/>
</dbReference>